<feature type="chain" id="PRO_0000139618" description="Hypoxanthine-guanine phosphoribosyltransferase">
    <location>
        <begin position="1"/>
        <end position="179"/>
    </location>
</feature>
<feature type="active site" description="Proton acceptor" evidence="2">
    <location>
        <position position="102"/>
    </location>
</feature>
<feature type="binding site" evidence="3">
    <location>
        <position position="42"/>
    </location>
    <ligand>
        <name>diphosphate</name>
        <dbReference type="ChEBI" id="CHEBI:33019"/>
    </ligand>
</feature>
<feature type="binding site" evidence="3">
    <location>
        <position position="43"/>
    </location>
    <ligand>
        <name>diphosphate</name>
        <dbReference type="ChEBI" id="CHEBI:33019"/>
    </ligand>
</feature>
<feature type="binding site" evidence="3">
    <location>
        <position position="98"/>
    </location>
    <ligand>
        <name>Mg(2+)</name>
        <dbReference type="ChEBI" id="CHEBI:18420"/>
    </ligand>
</feature>
<feature type="binding site" evidence="3">
    <location>
        <position position="99"/>
    </location>
    <ligand>
        <name>Mg(2+)</name>
        <dbReference type="ChEBI" id="CHEBI:18420"/>
    </ligand>
</feature>
<feature type="binding site" evidence="3">
    <location>
        <position position="130"/>
    </location>
    <ligand>
        <name>GMP</name>
        <dbReference type="ChEBI" id="CHEBI:58115"/>
    </ligand>
</feature>
<feature type="binding site" evidence="3">
    <location>
        <begin position="151"/>
        <end position="152"/>
    </location>
    <ligand>
        <name>GMP</name>
        <dbReference type="ChEBI" id="CHEBI:58115"/>
    </ligand>
</feature>
<feature type="binding site" evidence="3">
    <location>
        <position position="158"/>
    </location>
    <ligand>
        <name>GMP</name>
        <dbReference type="ChEBI" id="CHEBI:58115"/>
    </ligand>
</feature>
<feature type="binding site" evidence="3">
    <location>
        <position position="164"/>
    </location>
    <ligand>
        <name>diphosphate</name>
        <dbReference type="ChEBI" id="CHEBI:33019"/>
    </ligand>
</feature>
<comment type="function">
    <text evidence="3">Purine salvage pathway enzyme that catalyzes the transfer of the ribosyl-5-phosphate group from 5-phospho-alpha-D-ribose 1-diphosphate (PRPP) to the N9 position of the 6-oxopurines hypoxanthine and guanine to form the corresponding ribonucleotides IMP (inosine 5'-monophosphate) and GMP (guanosine 5'-monophosphate), with the release of PPi.</text>
</comment>
<comment type="catalytic activity">
    <reaction evidence="3">
        <text>IMP + diphosphate = hypoxanthine + 5-phospho-alpha-D-ribose 1-diphosphate</text>
        <dbReference type="Rhea" id="RHEA:17973"/>
        <dbReference type="ChEBI" id="CHEBI:17368"/>
        <dbReference type="ChEBI" id="CHEBI:33019"/>
        <dbReference type="ChEBI" id="CHEBI:58017"/>
        <dbReference type="ChEBI" id="CHEBI:58053"/>
        <dbReference type="EC" id="2.4.2.8"/>
    </reaction>
    <physiologicalReaction direction="right-to-left" evidence="3">
        <dbReference type="Rhea" id="RHEA:17975"/>
    </physiologicalReaction>
</comment>
<comment type="catalytic activity">
    <reaction evidence="3">
        <text>GMP + diphosphate = guanine + 5-phospho-alpha-D-ribose 1-diphosphate</text>
        <dbReference type="Rhea" id="RHEA:25424"/>
        <dbReference type="ChEBI" id="CHEBI:16235"/>
        <dbReference type="ChEBI" id="CHEBI:33019"/>
        <dbReference type="ChEBI" id="CHEBI:58017"/>
        <dbReference type="ChEBI" id="CHEBI:58115"/>
        <dbReference type="EC" id="2.4.2.8"/>
    </reaction>
    <physiologicalReaction direction="right-to-left" evidence="3">
        <dbReference type="Rhea" id="RHEA:25426"/>
    </physiologicalReaction>
</comment>
<comment type="cofactor">
    <cofactor evidence="3">
        <name>Mg(2+)</name>
        <dbReference type="ChEBI" id="CHEBI:18420"/>
    </cofactor>
</comment>
<comment type="pathway">
    <text evidence="3">Purine metabolism; IMP biosynthesis via salvage pathway; IMP from hypoxanthine: step 1/1.</text>
</comment>
<comment type="pathway">
    <text evidence="3">Purine metabolism; GMP biosynthesis via salvage pathway; GMP from guanine: step 1/1.</text>
</comment>
<comment type="subcellular location">
    <subcellularLocation>
        <location evidence="1">Cytoplasm</location>
    </subcellularLocation>
</comment>
<comment type="similarity">
    <text evidence="4">Belongs to the purine/pyrimidine phosphoribosyltransferase family.</text>
</comment>
<evidence type="ECO:0000250" key="1"/>
<evidence type="ECO:0000250" key="2">
    <source>
        <dbReference type="UniProtKB" id="P0A9M2"/>
    </source>
</evidence>
<evidence type="ECO:0000250" key="3">
    <source>
        <dbReference type="UniProtKB" id="P9WHQ9"/>
    </source>
</evidence>
<evidence type="ECO:0000305" key="4"/>
<gene>
    <name type="primary">hpt</name>
    <name type="ordered locus">SE_2273</name>
</gene>
<sequence>MHKDLKNVLLSEEDIQNICKEMGAIITEDYKDRPLVCVGILKGSVMFMADLIKRIDTHLSIDFMDVSSYHGGTESTGEVQILKDLGASIENKDVLIIEDILETGTTLKSITELLQSRKVNSLEIATLLDKPNRRKADIEAKYVGKKIPDEFVVGYGLDYRELYRNLPYIGTLKAEVYSK</sequence>
<protein>
    <recommendedName>
        <fullName>Hypoxanthine-guanine phosphoribosyltransferase</fullName>
        <shortName>HGPRT</shortName>
        <shortName>HGPRTase</shortName>
        <ecNumber evidence="3">2.4.2.8</ecNumber>
    </recommendedName>
</protein>
<proteinExistence type="inferred from homology"/>
<keyword id="KW-0963">Cytoplasm</keyword>
<keyword id="KW-0328">Glycosyltransferase</keyword>
<keyword id="KW-0460">Magnesium</keyword>
<keyword id="KW-0479">Metal-binding</keyword>
<keyword id="KW-0547">Nucleotide-binding</keyword>
<keyword id="KW-0660">Purine salvage</keyword>
<keyword id="KW-0808">Transferase</keyword>
<dbReference type="EC" id="2.4.2.8" evidence="3"/>
<dbReference type="EMBL" id="AE015929">
    <property type="protein sequence ID" value="AAO05915.1"/>
    <property type="molecule type" value="Genomic_DNA"/>
</dbReference>
<dbReference type="RefSeq" id="NP_765828.1">
    <property type="nucleotide sequence ID" value="NC_004461.1"/>
</dbReference>
<dbReference type="RefSeq" id="WP_001832216.1">
    <property type="nucleotide sequence ID" value="NZ_WBME01000023.1"/>
</dbReference>
<dbReference type="SMR" id="Q8CQV4"/>
<dbReference type="GeneID" id="50019579"/>
<dbReference type="KEGG" id="sep:SE_2273"/>
<dbReference type="PATRIC" id="fig|176280.10.peg.2216"/>
<dbReference type="eggNOG" id="COG0634">
    <property type="taxonomic scope" value="Bacteria"/>
</dbReference>
<dbReference type="HOGENOM" id="CLU_073615_0_0_9"/>
<dbReference type="OrthoDB" id="9802824at2"/>
<dbReference type="UniPathway" id="UPA00591">
    <property type="reaction ID" value="UER00648"/>
</dbReference>
<dbReference type="UniPathway" id="UPA00909">
    <property type="reaction ID" value="UER00887"/>
</dbReference>
<dbReference type="Proteomes" id="UP000001411">
    <property type="component" value="Chromosome"/>
</dbReference>
<dbReference type="GO" id="GO:0005829">
    <property type="term" value="C:cytosol"/>
    <property type="evidence" value="ECO:0007669"/>
    <property type="project" value="TreeGrafter"/>
</dbReference>
<dbReference type="GO" id="GO:0052657">
    <property type="term" value="F:guanine phosphoribosyltransferase activity"/>
    <property type="evidence" value="ECO:0007669"/>
    <property type="project" value="RHEA"/>
</dbReference>
<dbReference type="GO" id="GO:0004422">
    <property type="term" value="F:hypoxanthine phosphoribosyltransferase activity"/>
    <property type="evidence" value="ECO:0007669"/>
    <property type="project" value="InterPro"/>
</dbReference>
<dbReference type="GO" id="GO:0000287">
    <property type="term" value="F:magnesium ion binding"/>
    <property type="evidence" value="ECO:0007669"/>
    <property type="project" value="TreeGrafter"/>
</dbReference>
<dbReference type="GO" id="GO:0000166">
    <property type="term" value="F:nucleotide binding"/>
    <property type="evidence" value="ECO:0007669"/>
    <property type="project" value="UniProtKB-KW"/>
</dbReference>
<dbReference type="GO" id="GO:0032263">
    <property type="term" value="P:GMP salvage"/>
    <property type="evidence" value="ECO:0007669"/>
    <property type="project" value="UniProtKB-UniPathway"/>
</dbReference>
<dbReference type="GO" id="GO:0006178">
    <property type="term" value="P:guanine salvage"/>
    <property type="evidence" value="ECO:0007669"/>
    <property type="project" value="TreeGrafter"/>
</dbReference>
<dbReference type="GO" id="GO:0046100">
    <property type="term" value="P:hypoxanthine metabolic process"/>
    <property type="evidence" value="ECO:0007669"/>
    <property type="project" value="TreeGrafter"/>
</dbReference>
<dbReference type="GO" id="GO:0032264">
    <property type="term" value="P:IMP salvage"/>
    <property type="evidence" value="ECO:0007669"/>
    <property type="project" value="UniProtKB-UniPathway"/>
</dbReference>
<dbReference type="GO" id="GO:0006166">
    <property type="term" value="P:purine ribonucleoside salvage"/>
    <property type="evidence" value="ECO:0007669"/>
    <property type="project" value="UniProtKB-KW"/>
</dbReference>
<dbReference type="CDD" id="cd06223">
    <property type="entry name" value="PRTases_typeI"/>
    <property type="match status" value="1"/>
</dbReference>
<dbReference type="FunFam" id="3.40.50.2020:FF:000006">
    <property type="entry name" value="Hypoxanthine phosphoribosyltransferase"/>
    <property type="match status" value="1"/>
</dbReference>
<dbReference type="Gene3D" id="3.40.50.2020">
    <property type="match status" value="1"/>
</dbReference>
<dbReference type="InterPro" id="IPR050408">
    <property type="entry name" value="HGPRT"/>
</dbReference>
<dbReference type="InterPro" id="IPR005904">
    <property type="entry name" value="Hxn_phspho_trans"/>
</dbReference>
<dbReference type="InterPro" id="IPR000836">
    <property type="entry name" value="PRibTrfase_dom"/>
</dbReference>
<dbReference type="InterPro" id="IPR029057">
    <property type="entry name" value="PRTase-like"/>
</dbReference>
<dbReference type="NCBIfam" id="TIGR01203">
    <property type="entry name" value="HGPRTase"/>
    <property type="match status" value="1"/>
</dbReference>
<dbReference type="PANTHER" id="PTHR43340:SF1">
    <property type="entry name" value="HYPOXANTHINE PHOSPHORIBOSYLTRANSFERASE"/>
    <property type="match status" value="1"/>
</dbReference>
<dbReference type="PANTHER" id="PTHR43340">
    <property type="entry name" value="HYPOXANTHINE-GUANINE PHOSPHORIBOSYLTRANSFERASE"/>
    <property type="match status" value="1"/>
</dbReference>
<dbReference type="Pfam" id="PF00156">
    <property type="entry name" value="Pribosyltran"/>
    <property type="match status" value="1"/>
</dbReference>
<dbReference type="SUPFAM" id="SSF53271">
    <property type="entry name" value="PRTase-like"/>
    <property type="match status" value="1"/>
</dbReference>
<organism>
    <name type="scientific">Staphylococcus epidermidis (strain ATCC 12228 / FDA PCI 1200)</name>
    <dbReference type="NCBI Taxonomy" id="176280"/>
    <lineage>
        <taxon>Bacteria</taxon>
        <taxon>Bacillati</taxon>
        <taxon>Bacillota</taxon>
        <taxon>Bacilli</taxon>
        <taxon>Bacillales</taxon>
        <taxon>Staphylococcaceae</taxon>
        <taxon>Staphylococcus</taxon>
    </lineage>
</organism>
<accession>Q8CQV4</accession>
<name>HGPRT_STAES</name>
<reference key="1">
    <citation type="journal article" date="2003" name="Mol. Microbiol.">
        <title>Genome-based analysis of virulence genes in a non-biofilm-forming Staphylococcus epidermidis strain (ATCC 12228).</title>
        <authorList>
            <person name="Zhang Y.-Q."/>
            <person name="Ren S.-X."/>
            <person name="Li H.-L."/>
            <person name="Wang Y.-X."/>
            <person name="Fu G."/>
            <person name="Yang J."/>
            <person name="Qin Z.-Q."/>
            <person name="Miao Y.-G."/>
            <person name="Wang W.-Y."/>
            <person name="Chen R.-S."/>
            <person name="Shen Y."/>
            <person name="Chen Z."/>
            <person name="Yuan Z.-H."/>
            <person name="Zhao G.-P."/>
            <person name="Qu D."/>
            <person name="Danchin A."/>
            <person name="Wen Y.-M."/>
        </authorList>
    </citation>
    <scope>NUCLEOTIDE SEQUENCE [LARGE SCALE GENOMIC DNA]</scope>
    <source>
        <strain>ATCC 12228 / FDA PCI 1200</strain>
    </source>
</reference>